<keyword id="KW-0032">Aminotransferase</keyword>
<keyword id="KW-0576">Peroxisome</keyword>
<keyword id="KW-0663">Pyridoxal phosphate</keyword>
<keyword id="KW-1185">Reference proteome</keyword>
<keyword id="KW-0808">Transferase</keyword>
<organism>
    <name type="scientific">Arabidopsis thaliana</name>
    <name type="common">Mouse-ear cress</name>
    <dbReference type="NCBI Taxonomy" id="3702"/>
    <lineage>
        <taxon>Eukaryota</taxon>
        <taxon>Viridiplantae</taxon>
        <taxon>Streptophyta</taxon>
        <taxon>Embryophyta</taxon>
        <taxon>Tracheophyta</taxon>
        <taxon>Spermatophyta</taxon>
        <taxon>Magnoliopsida</taxon>
        <taxon>eudicotyledons</taxon>
        <taxon>Gunneridae</taxon>
        <taxon>Pentapetalae</taxon>
        <taxon>rosids</taxon>
        <taxon>malvids</taxon>
        <taxon>Brassicales</taxon>
        <taxon>Brassicaceae</taxon>
        <taxon>Camelineae</taxon>
        <taxon>Arabidopsis</taxon>
    </lineage>
</organism>
<comment type="function">
    <text evidence="2">Catalyzes the Glu:glyoxylate aminotransferase (GGT), Ala:glyoxylate aminotransferase (AGT), Ala:2-oxoglutarate aminotransferase (AKT) and Glu:pyruvate aminotransferase (GPT) reactions in peroxisomes.</text>
</comment>
<comment type="catalytic activity">
    <reaction evidence="2">
        <text>L-alanine + 2-oxoglutarate = pyruvate + L-glutamate</text>
        <dbReference type="Rhea" id="RHEA:19453"/>
        <dbReference type="ChEBI" id="CHEBI:15361"/>
        <dbReference type="ChEBI" id="CHEBI:16810"/>
        <dbReference type="ChEBI" id="CHEBI:29985"/>
        <dbReference type="ChEBI" id="CHEBI:57972"/>
        <dbReference type="EC" id="2.6.1.2"/>
    </reaction>
</comment>
<comment type="catalytic activity">
    <reaction evidence="2">
        <text>glyoxylate + L-alanine = glycine + pyruvate</text>
        <dbReference type="Rhea" id="RHEA:24248"/>
        <dbReference type="ChEBI" id="CHEBI:15361"/>
        <dbReference type="ChEBI" id="CHEBI:36655"/>
        <dbReference type="ChEBI" id="CHEBI:57305"/>
        <dbReference type="ChEBI" id="CHEBI:57972"/>
        <dbReference type="EC" id="2.6.1.44"/>
    </reaction>
</comment>
<comment type="catalytic activity">
    <reaction evidence="2">
        <text>glycine + 2-oxoglutarate = glyoxylate + L-glutamate</text>
        <dbReference type="Rhea" id="RHEA:14089"/>
        <dbReference type="ChEBI" id="CHEBI:16810"/>
        <dbReference type="ChEBI" id="CHEBI:29985"/>
        <dbReference type="ChEBI" id="CHEBI:36655"/>
        <dbReference type="ChEBI" id="CHEBI:57305"/>
        <dbReference type="EC" id="2.6.1.4"/>
    </reaction>
</comment>
<comment type="cofactor">
    <cofactor evidence="1">
        <name>pyridoxal 5'-phosphate</name>
        <dbReference type="ChEBI" id="CHEBI:597326"/>
    </cofactor>
</comment>
<comment type="biophysicochemical properties">
    <kinetics>
        <KM evidence="2">3.32 mM for glutamate</KM>
        <KM evidence="2">3.56 mM for alanine</KM>
        <KM evidence="2">0.14 mM for glyoxylate</KM>
        <KM evidence="2">0.51 mM for 2-oxoglutarate</KM>
        <KM evidence="2">0.36 mM for pyruvate</KM>
    </kinetics>
</comment>
<comment type="pathway">
    <text>Photosynthesis; C4 acid pathway.</text>
</comment>
<comment type="pathway">
    <text>Amino-acid degradation; L-alanine degradation via transaminase pathway; pyruvate from L-alanine: step 1/1.</text>
</comment>
<comment type="subunit">
    <text evidence="1">Homodimer.</text>
</comment>
<comment type="subcellular location">
    <subcellularLocation>
        <location evidence="2">Peroxisome</location>
    </subcellularLocation>
</comment>
<comment type="tissue specificity">
    <text evidence="2 3">Expressed at low levels in seedlings, leaves, flowers, roots, and green siliques.</text>
</comment>
<comment type="PTM">
    <text evidence="1">The N-terminus is blocked.</text>
</comment>
<comment type="similarity">
    <text evidence="4">Belongs to the class-I pyridoxal-phosphate-dependent aminotransferase family. Alanine aminotransferase subfamily.</text>
</comment>
<name>GGT2_ARATH</name>
<feature type="chain" id="PRO_0000416041" description="Glutamate--glyoxylate aminotransferase 2">
    <location>
        <begin position="1"/>
        <end position="481"/>
    </location>
</feature>
<feature type="short sequence motif" description="Peroxisomal targeting signal">
    <location>
        <begin position="479"/>
        <end position="481"/>
    </location>
</feature>
<feature type="modified residue" description="N6-(pyridoxal phosphate)lysine" evidence="1">
    <location>
        <position position="291"/>
    </location>
</feature>
<feature type="sequence conflict" description="In Ref. 6; AAM61453." evidence="4" ref="6">
    <original>G</original>
    <variation>C</variation>
    <location>
        <position position="37"/>
    </location>
</feature>
<feature type="sequence conflict" description="In Ref. 6; AAM61453." evidence="4" ref="6">
    <original>E</original>
    <variation>D</variation>
    <location>
        <position position="118"/>
    </location>
</feature>
<feature type="sequence conflict" description="In Ref. 5; BAH20108." evidence="4" ref="5">
    <original>Y</original>
    <variation>H</variation>
    <location>
        <position position="318"/>
    </location>
</feature>
<gene>
    <name type="primary">GGAT2</name>
    <name type="synonym">AOAT2</name>
    <name type="synonym">GGT2</name>
    <name type="ordered locus">At1g70580</name>
    <name type="ORF">F24J13.15</name>
    <name type="ORF">F5A18.24</name>
</gene>
<protein>
    <recommendedName>
        <fullName>Glutamate--glyoxylate aminotransferase 2</fullName>
        <shortName>AtGGT2</shortName>
        <ecNumber>2.6.1.4</ecNumber>
    </recommendedName>
    <alternativeName>
        <fullName>Alanine aminotransferase GGT2</fullName>
        <ecNumber>2.6.1.2</ecNumber>
    </alternativeName>
    <alternativeName>
        <fullName>Alanine--glyoxylate aminotransferase GGT2</fullName>
        <ecNumber>2.6.1.44</ecNumber>
    </alternativeName>
    <alternativeName>
        <fullName>Alanine-2-oxoglutarate aminotransferase 2</fullName>
        <ecNumber>2.6.1.-</ecNumber>
    </alternativeName>
</protein>
<evidence type="ECO:0000250" key="1"/>
<evidence type="ECO:0000269" key="2">
    <source>
    </source>
</evidence>
<evidence type="ECO:0000269" key="3">
    <source>
    </source>
</evidence>
<evidence type="ECO:0000305" key="4"/>
<dbReference type="EC" id="2.6.1.4"/>
<dbReference type="EC" id="2.6.1.2"/>
<dbReference type="EC" id="2.6.1.44"/>
<dbReference type="EC" id="2.6.1.-"/>
<dbReference type="EMBL" id="AF479640">
    <property type="protein sequence ID" value="AAN62333.1"/>
    <property type="molecule type" value="mRNA"/>
</dbReference>
<dbReference type="EMBL" id="AC010796">
    <property type="protein sequence ID" value="AAG52480.1"/>
    <property type="molecule type" value="Genomic_DNA"/>
</dbReference>
<dbReference type="EMBL" id="AC011663">
    <property type="protein sequence ID" value="AAG52344.1"/>
    <property type="molecule type" value="Genomic_DNA"/>
</dbReference>
<dbReference type="EMBL" id="CP002684">
    <property type="protein sequence ID" value="AEE35082.1"/>
    <property type="molecule type" value="Genomic_DNA"/>
</dbReference>
<dbReference type="EMBL" id="CP002684">
    <property type="protein sequence ID" value="AEE35083.1"/>
    <property type="molecule type" value="Genomic_DNA"/>
</dbReference>
<dbReference type="EMBL" id="CP002684">
    <property type="protein sequence ID" value="AEE35084.1"/>
    <property type="molecule type" value="Genomic_DNA"/>
</dbReference>
<dbReference type="EMBL" id="CP002684">
    <property type="protein sequence ID" value="AEE35085.1"/>
    <property type="molecule type" value="Genomic_DNA"/>
</dbReference>
<dbReference type="EMBL" id="AY035130">
    <property type="protein sequence ID" value="AAK59635.1"/>
    <property type="molecule type" value="mRNA"/>
</dbReference>
<dbReference type="EMBL" id="AY062982">
    <property type="protein sequence ID" value="AAL34156.1"/>
    <property type="molecule type" value="mRNA"/>
</dbReference>
<dbReference type="EMBL" id="AK316788">
    <property type="protein sequence ID" value="BAH19506.1"/>
    <property type="molecule type" value="mRNA"/>
</dbReference>
<dbReference type="EMBL" id="AK317441">
    <property type="protein sequence ID" value="BAH20108.1"/>
    <property type="molecule type" value="mRNA"/>
</dbReference>
<dbReference type="EMBL" id="AY084890">
    <property type="protein sequence ID" value="AAM61453.1"/>
    <property type="molecule type" value="mRNA"/>
</dbReference>
<dbReference type="PIR" id="H96729">
    <property type="entry name" value="H96729"/>
</dbReference>
<dbReference type="RefSeq" id="NP_001031262.1">
    <property type="nucleotide sequence ID" value="NM_001036185.1"/>
</dbReference>
<dbReference type="RefSeq" id="NP_001031263.1">
    <property type="nucleotide sequence ID" value="NM_001036186.2"/>
</dbReference>
<dbReference type="RefSeq" id="NP_177215.1">
    <property type="nucleotide sequence ID" value="NM_105726.3"/>
</dbReference>
<dbReference type="RefSeq" id="NP_974122.1">
    <property type="nucleotide sequence ID" value="NM_202393.2"/>
</dbReference>
<dbReference type="SMR" id="Q9S7E9"/>
<dbReference type="BioGRID" id="28615">
    <property type="interactions" value="1"/>
</dbReference>
<dbReference type="FunCoup" id="Q9S7E9">
    <property type="interactions" value="1556"/>
</dbReference>
<dbReference type="STRING" id="3702.Q9S7E9"/>
<dbReference type="iPTMnet" id="Q9S7E9"/>
<dbReference type="PaxDb" id="3702-AT1G70580.2"/>
<dbReference type="ProMEX" id="Q9S7E9"/>
<dbReference type="ProteomicsDB" id="224788"/>
<dbReference type="EnsemblPlants" id="AT1G70580.1">
    <property type="protein sequence ID" value="AT1G70580.1"/>
    <property type="gene ID" value="AT1G70580"/>
</dbReference>
<dbReference type="EnsemblPlants" id="AT1G70580.2">
    <property type="protein sequence ID" value="AT1G70580.2"/>
    <property type="gene ID" value="AT1G70580"/>
</dbReference>
<dbReference type="EnsemblPlants" id="AT1G70580.3">
    <property type="protein sequence ID" value="AT1G70580.3"/>
    <property type="gene ID" value="AT1G70580"/>
</dbReference>
<dbReference type="EnsemblPlants" id="AT1G70580.4">
    <property type="protein sequence ID" value="AT1G70580.4"/>
    <property type="gene ID" value="AT1G70580"/>
</dbReference>
<dbReference type="GeneID" id="843395"/>
<dbReference type="Gramene" id="AT1G70580.1">
    <property type="protein sequence ID" value="AT1G70580.1"/>
    <property type="gene ID" value="AT1G70580"/>
</dbReference>
<dbReference type="Gramene" id="AT1G70580.2">
    <property type="protein sequence ID" value="AT1G70580.2"/>
    <property type="gene ID" value="AT1G70580"/>
</dbReference>
<dbReference type="Gramene" id="AT1G70580.3">
    <property type="protein sequence ID" value="AT1G70580.3"/>
    <property type="gene ID" value="AT1G70580"/>
</dbReference>
<dbReference type="Gramene" id="AT1G70580.4">
    <property type="protein sequence ID" value="AT1G70580.4"/>
    <property type="gene ID" value="AT1G70580"/>
</dbReference>
<dbReference type="KEGG" id="ath:AT1G70580"/>
<dbReference type="Araport" id="AT1G70580"/>
<dbReference type="TAIR" id="AT1G70580">
    <property type="gene designation" value="AOAT2"/>
</dbReference>
<dbReference type="eggNOG" id="KOG0258">
    <property type="taxonomic scope" value="Eukaryota"/>
</dbReference>
<dbReference type="HOGENOM" id="CLU_014254_3_0_1"/>
<dbReference type="InParanoid" id="Q9S7E9"/>
<dbReference type="OMA" id="GTQHFRV"/>
<dbReference type="PhylomeDB" id="Q9S7E9"/>
<dbReference type="BioCyc" id="ARA:AT1G70580-MONOMER"/>
<dbReference type="BioCyc" id="MetaCyc:AT1G70580-MONOMER"/>
<dbReference type="BRENDA" id="2.6.1.44">
    <property type="organism ID" value="399"/>
</dbReference>
<dbReference type="SABIO-RK" id="Q9S7E9"/>
<dbReference type="UniPathway" id="UPA00322"/>
<dbReference type="UniPathway" id="UPA00528">
    <property type="reaction ID" value="UER00586"/>
</dbReference>
<dbReference type="PRO" id="PR:Q9S7E9"/>
<dbReference type="Proteomes" id="UP000006548">
    <property type="component" value="Chromosome 1"/>
</dbReference>
<dbReference type="ExpressionAtlas" id="Q9S7E9">
    <property type="expression patterns" value="baseline and differential"/>
</dbReference>
<dbReference type="GO" id="GO:0009507">
    <property type="term" value="C:chloroplast"/>
    <property type="evidence" value="ECO:0007005"/>
    <property type="project" value="TAIR"/>
</dbReference>
<dbReference type="GO" id="GO:0009570">
    <property type="term" value="C:chloroplast stroma"/>
    <property type="evidence" value="ECO:0007005"/>
    <property type="project" value="TAIR"/>
</dbReference>
<dbReference type="GO" id="GO:0005829">
    <property type="term" value="C:cytosol"/>
    <property type="evidence" value="ECO:0007005"/>
    <property type="project" value="TAIR"/>
</dbReference>
<dbReference type="GO" id="GO:0005739">
    <property type="term" value="C:mitochondrion"/>
    <property type="evidence" value="ECO:0007005"/>
    <property type="project" value="TAIR"/>
</dbReference>
<dbReference type="GO" id="GO:0005777">
    <property type="term" value="C:peroxisome"/>
    <property type="evidence" value="ECO:0000314"/>
    <property type="project" value="TAIR"/>
</dbReference>
<dbReference type="GO" id="GO:0008453">
    <property type="term" value="F:alanine-glyoxylate transaminase activity"/>
    <property type="evidence" value="ECO:0000314"/>
    <property type="project" value="TAIR"/>
</dbReference>
<dbReference type="GO" id="GO:0047958">
    <property type="term" value="F:glycine:2-oxoglutarate aminotransferase activity"/>
    <property type="evidence" value="ECO:0000314"/>
    <property type="project" value="TAIR"/>
</dbReference>
<dbReference type="GO" id="GO:0004021">
    <property type="term" value="F:L-alanine:2-oxoglutarate aminotransferase activity"/>
    <property type="evidence" value="ECO:0000314"/>
    <property type="project" value="TAIR"/>
</dbReference>
<dbReference type="GO" id="GO:0003729">
    <property type="term" value="F:mRNA binding"/>
    <property type="evidence" value="ECO:0000314"/>
    <property type="project" value="TAIR"/>
</dbReference>
<dbReference type="GO" id="GO:0030170">
    <property type="term" value="F:pyridoxal phosphate binding"/>
    <property type="evidence" value="ECO:0007669"/>
    <property type="project" value="InterPro"/>
</dbReference>
<dbReference type="GO" id="GO:0009058">
    <property type="term" value="P:biosynthetic process"/>
    <property type="evidence" value="ECO:0007669"/>
    <property type="project" value="InterPro"/>
</dbReference>
<dbReference type="GO" id="GO:0042853">
    <property type="term" value="P:L-alanine catabolic process"/>
    <property type="evidence" value="ECO:0007669"/>
    <property type="project" value="UniProtKB-UniPathway"/>
</dbReference>
<dbReference type="CDD" id="cd00609">
    <property type="entry name" value="AAT_like"/>
    <property type="match status" value="1"/>
</dbReference>
<dbReference type="FunFam" id="1.10.287.1970:FF:000001">
    <property type="entry name" value="Alanine aminotransferase 2"/>
    <property type="match status" value="1"/>
</dbReference>
<dbReference type="FunFam" id="3.90.1150.10:FF:000010">
    <property type="entry name" value="Alanine aminotransferase 2"/>
    <property type="match status" value="1"/>
</dbReference>
<dbReference type="FunFam" id="3.40.640.10:FF:000012">
    <property type="entry name" value="alanine aminotransferase 2"/>
    <property type="match status" value="1"/>
</dbReference>
<dbReference type="Gene3D" id="1.10.287.1970">
    <property type="match status" value="1"/>
</dbReference>
<dbReference type="Gene3D" id="3.90.1150.10">
    <property type="entry name" value="Aspartate Aminotransferase, domain 1"/>
    <property type="match status" value="1"/>
</dbReference>
<dbReference type="Gene3D" id="3.40.640.10">
    <property type="entry name" value="Type I PLP-dependent aspartate aminotransferase-like (Major domain)"/>
    <property type="match status" value="1"/>
</dbReference>
<dbReference type="InterPro" id="IPR045088">
    <property type="entry name" value="ALAT1/2-like"/>
</dbReference>
<dbReference type="InterPro" id="IPR004839">
    <property type="entry name" value="Aminotransferase_I/II_large"/>
</dbReference>
<dbReference type="InterPro" id="IPR015424">
    <property type="entry name" value="PyrdxlP-dep_Trfase"/>
</dbReference>
<dbReference type="InterPro" id="IPR015421">
    <property type="entry name" value="PyrdxlP-dep_Trfase_major"/>
</dbReference>
<dbReference type="InterPro" id="IPR015422">
    <property type="entry name" value="PyrdxlP-dep_Trfase_small"/>
</dbReference>
<dbReference type="PANTHER" id="PTHR11751">
    <property type="entry name" value="ALANINE AMINOTRANSFERASE"/>
    <property type="match status" value="1"/>
</dbReference>
<dbReference type="PANTHER" id="PTHR11751:SF373">
    <property type="entry name" value="GLUTAMATE--GLYOXYLATE AMINOTRANSFERASE 2"/>
    <property type="match status" value="1"/>
</dbReference>
<dbReference type="Pfam" id="PF00155">
    <property type="entry name" value="Aminotran_1_2"/>
    <property type="match status" value="1"/>
</dbReference>
<dbReference type="SUPFAM" id="SSF53383">
    <property type="entry name" value="PLP-dependent transferases"/>
    <property type="match status" value="1"/>
</dbReference>
<reference key="1">
    <citation type="journal article" date="2003" name="Plant Physiol.">
        <title>Alanine aminotransferase homologs catalyze the glutamate:glyoxylate aminotransferase reaction in peroxisomes of Arabidopsis.</title>
        <authorList>
            <person name="Liepman A.H."/>
            <person name="Olsen L.J."/>
        </authorList>
    </citation>
    <scope>NUCLEOTIDE SEQUENCE [MRNA]</scope>
    <scope>FUNCTION</scope>
    <scope>SUBCELLULAR LOCATION</scope>
    <scope>TISSUE SPECIFICITY</scope>
    <scope>CATALYTIC ACTIVITY</scope>
    <scope>BIOPHYSICOCHEMICAL PROPERTIES</scope>
</reference>
<reference key="2">
    <citation type="journal article" date="2000" name="Nature">
        <title>Sequence and analysis of chromosome 1 of the plant Arabidopsis thaliana.</title>
        <authorList>
            <person name="Theologis A."/>
            <person name="Ecker J.R."/>
            <person name="Palm C.J."/>
            <person name="Federspiel N.A."/>
            <person name="Kaul S."/>
            <person name="White O."/>
            <person name="Alonso J."/>
            <person name="Altafi H."/>
            <person name="Araujo R."/>
            <person name="Bowman C.L."/>
            <person name="Brooks S.Y."/>
            <person name="Buehler E."/>
            <person name="Chan A."/>
            <person name="Chao Q."/>
            <person name="Chen H."/>
            <person name="Cheuk R.F."/>
            <person name="Chin C.W."/>
            <person name="Chung M.K."/>
            <person name="Conn L."/>
            <person name="Conway A.B."/>
            <person name="Conway A.R."/>
            <person name="Creasy T.H."/>
            <person name="Dewar K."/>
            <person name="Dunn P."/>
            <person name="Etgu P."/>
            <person name="Feldblyum T.V."/>
            <person name="Feng J.-D."/>
            <person name="Fong B."/>
            <person name="Fujii C.Y."/>
            <person name="Gill J.E."/>
            <person name="Goldsmith A.D."/>
            <person name="Haas B."/>
            <person name="Hansen N.F."/>
            <person name="Hughes B."/>
            <person name="Huizar L."/>
            <person name="Hunter J.L."/>
            <person name="Jenkins J."/>
            <person name="Johnson-Hopson C."/>
            <person name="Khan S."/>
            <person name="Khaykin E."/>
            <person name="Kim C.J."/>
            <person name="Koo H.L."/>
            <person name="Kremenetskaia I."/>
            <person name="Kurtz D.B."/>
            <person name="Kwan A."/>
            <person name="Lam B."/>
            <person name="Langin-Hooper S."/>
            <person name="Lee A."/>
            <person name="Lee J.M."/>
            <person name="Lenz C.A."/>
            <person name="Li J.H."/>
            <person name="Li Y.-P."/>
            <person name="Lin X."/>
            <person name="Liu S.X."/>
            <person name="Liu Z.A."/>
            <person name="Luros J.S."/>
            <person name="Maiti R."/>
            <person name="Marziali A."/>
            <person name="Militscher J."/>
            <person name="Miranda M."/>
            <person name="Nguyen M."/>
            <person name="Nierman W.C."/>
            <person name="Osborne B.I."/>
            <person name="Pai G."/>
            <person name="Peterson J."/>
            <person name="Pham P.K."/>
            <person name="Rizzo M."/>
            <person name="Rooney T."/>
            <person name="Rowley D."/>
            <person name="Sakano H."/>
            <person name="Salzberg S.L."/>
            <person name="Schwartz J.R."/>
            <person name="Shinn P."/>
            <person name="Southwick A.M."/>
            <person name="Sun H."/>
            <person name="Tallon L.J."/>
            <person name="Tambunga G."/>
            <person name="Toriumi M.J."/>
            <person name="Town C.D."/>
            <person name="Utterback T."/>
            <person name="Van Aken S."/>
            <person name="Vaysberg M."/>
            <person name="Vysotskaia V.S."/>
            <person name="Walker M."/>
            <person name="Wu D."/>
            <person name="Yu G."/>
            <person name="Fraser C.M."/>
            <person name="Venter J.C."/>
            <person name="Davis R.W."/>
        </authorList>
    </citation>
    <scope>NUCLEOTIDE SEQUENCE [LARGE SCALE GENOMIC DNA]</scope>
    <source>
        <strain>cv. Columbia</strain>
    </source>
</reference>
<reference key="3">
    <citation type="journal article" date="2017" name="Plant J.">
        <title>Araport11: a complete reannotation of the Arabidopsis thaliana reference genome.</title>
        <authorList>
            <person name="Cheng C.Y."/>
            <person name="Krishnakumar V."/>
            <person name="Chan A.P."/>
            <person name="Thibaud-Nissen F."/>
            <person name="Schobel S."/>
            <person name="Town C.D."/>
        </authorList>
    </citation>
    <scope>GENOME REANNOTATION</scope>
    <source>
        <strain>cv. Columbia</strain>
    </source>
</reference>
<reference key="4">
    <citation type="journal article" date="2003" name="Science">
        <title>Empirical analysis of transcriptional activity in the Arabidopsis genome.</title>
        <authorList>
            <person name="Yamada K."/>
            <person name="Lim J."/>
            <person name="Dale J.M."/>
            <person name="Chen H."/>
            <person name="Shinn P."/>
            <person name="Palm C.J."/>
            <person name="Southwick A.M."/>
            <person name="Wu H.C."/>
            <person name="Kim C.J."/>
            <person name="Nguyen M."/>
            <person name="Pham P.K."/>
            <person name="Cheuk R.F."/>
            <person name="Karlin-Newmann G."/>
            <person name="Liu S.X."/>
            <person name="Lam B."/>
            <person name="Sakano H."/>
            <person name="Wu T."/>
            <person name="Yu G."/>
            <person name="Miranda M."/>
            <person name="Quach H.L."/>
            <person name="Tripp M."/>
            <person name="Chang C.H."/>
            <person name="Lee J.M."/>
            <person name="Toriumi M.J."/>
            <person name="Chan M.M."/>
            <person name="Tang C.C."/>
            <person name="Onodera C.S."/>
            <person name="Deng J.M."/>
            <person name="Akiyama K."/>
            <person name="Ansari Y."/>
            <person name="Arakawa T."/>
            <person name="Banh J."/>
            <person name="Banno F."/>
            <person name="Bowser L."/>
            <person name="Brooks S.Y."/>
            <person name="Carninci P."/>
            <person name="Chao Q."/>
            <person name="Choy N."/>
            <person name="Enju A."/>
            <person name="Goldsmith A.D."/>
            <person name="Gurjal M."/>
            <person name="Hansen N.F."/>
            <person name="Hayashizaki Y."/>
            <person name="Johnson-Hopson C."/>
            <person name="Hsuan V.W."/>
            <person name="Iida K."/>
            <person name="Karnes M."/>
            <person name="Khan S."/>
            <person name="Koesema E."/>
            <person name="Ishida J."/>
            <person name="Jiang P.X."/>
            <person name="Jones T."/>
            <person name="Kawai J."/>
            <person name="Kamiya A."/>
            <person name="Meyers C."/>
            <person name="Nakajima M."/>
            <person name="Narusaka M."/>
            <person name="Seki M."/>
            <person name="Sakurai T."/>
            <person name="Satou M."/>
            <person name="Tamse R."/>
            <person name="Vaysberg M."/>
            <person name="Wallender E.K."/>
            <person name="Wong C."/>
            <person name="Yamamura Y."/>
            <person name="Yuan S."/>
            <person name="Shinozaki K."/>
            <person name="Davis R.W."/>
            <person name="Theologis A."/>
            <person name="Ecker J.R."/>
        </authorList>
    </citation>
    <scope>NUCLEOTIDE SEQUENCE [LARGE SCALE MRNA]</scope>
    <source>
        <strain>cv. Columbia</strain>
    </source>
</reference>
<reference key="5">
    <citation type="journal article" date="2009" name="DNA Res.">
        <title>Analysis of multiple occurrences of alternative splicing events in Arabidopsis thaliana using novel sequenced full-length cDNAs.</title>
        <authorList>
            <person name="Iida K."/>
            <person name="Fukami-Kobayashi K."/>
            <person name="Toyoda A."/>
            <person name="Sakaki Y."/>
            <person name="Kobayashi M."/>
            <person name="Seki M."/>
            <person name="Shinozaki K."/>
        </authorList>
    </citation>
    <scope>NUCLEOTIDE SEQUENCE [LARGE SCALE MRNA]</scope>
    <source>
        <strain>cv. Columbia</strain>
        <tissue>Root</tissue>
        <tissue>Rosette leaf</tissue>
    </source>
</reference>
<reference key="6">
    <citation type="submission" date="2002-03" db="EMBL/GenBank/DDBJ databases">
        <title>Full-length cDNA from Arabidopsis thaliana.</title>
        <authorList>
            <person name="Brover V.V."/>
            <person name="Troukhan M.E."/>
            <person name="Alexandrov N.A."/>
            <person name="Lu Y.-P."/>
            <person name="Flavell R.B."/>
            <person name="Feldmann K.A."/>
        </authorList>
    </citation>
    <scope>NUCLEOTIDE SEQUENCE [LARGE SCALE MRNA]</scope>
</reference>
<reference key="7">
    <citation type="journal article" date="2007" name="Plant Cell">
        <title>Proteome analysis of Arabidopsis leaf peroxisomes reveals novel targeting peptides, metabolic pathways, and defense mechanisms.</title>
        <authorList>
            <person name="Reumann S."/>
            <person name="Babujee L."/>
            <person name="Ma C."/>
            <person name="Wienkoop S."/>
            <person name="Siemsen T."/>
            <person name="Antonicelli G.E."/>
            <person name="Rasche N."/>
            <person name="Lueder F."/>
            <person name="Weckwerth W."/>
            <person name="Jahn O."/>
        </authorList>
    </citation>
    <scope>IDENTIFICATION BY MASS SPECTROMETRY</scope>
</reference>
<reference key="8">
    <citation type="journal article" date="2003" name="Plant J.">
        <title>Identification of photorespiratory glutamate:glyoxylate aminotransferase (GGAT) gene in Arabidopsis.</title>
        <authorList>
            <person name="Igarashi D."/>
            <person name="Miwa T."/>
            <person name="Seki M."/>
            <person name="Kobayashi M."/>
            <person name="Kato T."/>
            <person name="Tabata S."/>
            <person name="Shinozaki K."/>
            <person name="Ohsumi C."/>
        </authorList>
    </citation>
    <scope>TISSUE SPECIFICITY</scope>
    <scope>GENE FAMILY</scope>
    <scope>NOMENCLATURE</scope>
</reference>
<accession>Q9S7E9</accession>
<accession>B9DH91</accession>
<accession>Q8LFE9</accession>
<sequence length="481" mass="53444">MSLKALDYESLNENVKNCQYAVRGELYLRASELQKEGKKIIFTNVGNPHALGQKPLTFPRQVVSLCQAPFLLDDPNVGMIFPADAIARAKHYLSLTSGGLGAYSDSRGLPGVRKEVAEFIERRDGYPSDPELIFLTDGASKGVMQILNCVIRGQKDGILVPVPQYPLYSATISLLGGTLVPYYLEESENWGLDVNNLRQSVAQARSQGITVRAMVIINPGNPTGQCLSEANIREILRFCCDERLVLLGDEVYQQNIYQDERPFISSKKVLMDMGAPISKEVQLISFHTVSKGYWGECGQRGGYFEMTNIPPRTVEEIYKVASIALSPNVSAQIFMGLMVSPPKPGDISYDQFVRESKGILESLRRRARMMTDGFNSCKNVVCNFTEGAMYSFPQIKLPSKAIQAAKQAGKVPDVFYCLKLLEATGISTVPGSGFGQKEGVFHLRTTILPAEEEMPEIMDSFKKFNDEFMSQYADNFGYSRM</sequence>
<proteinExistence type="evidence at protein level"/>